<organism>
    <name type="scientific">Haemophilus influenzae (strain ATCC 51907 / DSM 11121 / KW20 / Rd)</name>
    <dbReference type="NCBI Taxonomy" id="71421"/>
    <lineage>
        <taxon>Bacteria</taxon>
        <taxon>Pseudomonadati</taxon>
        <taxon>Pseudomonadota</taxon>
        <taxon>Gammaproteobacteria</taxon>
        <taxon>Pasteurellales</taxon>
        <taxon>Pasteurellaceae</taxon>
        <taxon>Haemophilus</taxon>
    </lineage>
</organism>
<sequence>MCGIVGIVSQSPVNESIYAALTLLQHRGQDAAGIVTVDDENRFRLRKANGLVSDVFHQEHMLRLQGNAGLGHVRYPTAGSSSVSEAQPFYVNSPYGVTLVHNGNLTNSVELKEKVFKTARRHVNTNSDSELLLNILANHLDHIPQDHLDPQDIFYAVRKTHKDVRGAYACLAMIIGHGMVAFRDPFGIRPLVLGKREENGKTDYMFASETVALDIVGFEFVRDIAAGEAVYVTFDGELYSQQCAESAVLNPCIFEYVYFARPDSTIDGVSVYAARVHMGEKLGQKIAKEWADEIDNIDVVIPVPETSTDIALQIARVLGKPYRQGFVKNRYVGRTFIMPGQAQRISSVRRKLNTIKAEFKDKNVLLVDDSIVRGTTSEQIVEMARSAGAKKIYFASAAPEIRYPNVYGIDMPSRDELIAYGRNVDEIAELIGVDKLIFQDLTALTESVQLENPAIQGFDCSVFTGEYITGDISPEYLEKIATQRNDNAKKKREKQASNLEIYNEQ</sequence>
<reference key="1">
    <citation type="journal article" date="1995" name="Science">
        <title>Whole-genome random sequencing and assembly of Haemophilus influenzae Rd.</title>
        <authorList>
            <person name="Fleischmann R.D."/>
            <person name="Adams M.D."/>
            <person name="White O."/>
            <person name="Clayton R.A."/>
            <person name="Kirkness E.F."/>
            <person name="Kerlavage A.R."/>
            <person name="Bult C.J."/>
            <person name="Tomb J.-F."/>
            <person name="Dougherty B.A."/>
            <person name="Merrick J.M."/>
            <person name="McKenney K."/>
            <person name="Sutton G.G."/>
            <person name="FitzHugh W."/>
            <person name="Fields C.A."/>
            <person name="Gocayne J.D."/>
            <person name="Scott J.D."/>
            <person name="Shirley R."/>
            <person name="Liu L.-I."/>
            <person name="Glodek A."/>
            <person name="Kelley J.M."/>
            <person name="Weidman J.F."/>
            <person name="Phillips C.A."/>
            <person name="Spriggs T."/>
            <person name="Hedblom E."/>
            <person name="Cotton M.D."/>
            <person name="Utterback T.R."/>
            <person name="Hanna M.C."/>
            <person name="Nguyen D.T."/>
            <person name="Saudek D.M."/>
            <person name="Brandon R.C."/>
            <person name="Fine L.D."/>
            <person name="Fritchman J.L."/>
            <person name="Fuhrmann J.L."/>
            <person name="Geoghagen N.S.M."/>
            <person name="Gnehm C.L."/>
            <person name="McDonald L.A."/>
            <person name="Small K.V."/>
            <person name="Fraser C.M."/>
            <person name="Smith H.O."/>
            <person name="Venter J.C."/>
        </authorList>
    </citation>
    <scope>NUCLEOTIDE SEQUENCE [LARGE SCALE GENOMIC DNA]</scope>
    <source>
        <strain>ATCC 51907 / DSM 11121 / KW20 / Rd</strain>
    </source>
</reference>
<comment type="function">
    <text evidence="2">Catalyzes the formation of phosphoribosylamine from phosphoribosylpyrophosphate (PRPP) and glutamine.</text>
</comment>
<comment type="catalytic activity">
    <reaction evidence="2">
        <text>5-phospho-beta-D-ribosylamine + L-glutamate + diphosphate = 5-phospho-alpha-D-ribose 1-diphosphate + L-glutamine + H2O</text>
        <dbReference type="Rhea" id="RHEA:14905"/>
        <dbReference type="ChEBI" id="CHEBI:15377"/>
        <dbReference type="ChEBI" id="CHEBI:29985"/>
        <dbReference type="ChEBI" id="CHEBI:33019"/>
        <dbReference type="ChEBI" id="CHEBI:58017"/>
        <dbReference type="ChEBI" id="CHEBI:58359"/>
        <dbReference type="ChEBI" id="CHEBI:58681"/>
        <dbReference type="EC" id="2.4.2.14"/>
    </reaction>
</comment>
<comment type="cofactor">
    <cofactor evidence="2">
        <name>Mg(2+)</name>
        <dbReference type="ChEBI" id="CHEBI:18420"/>
    </cofactor>
    <text evidence="2">Binds 1 Mg(2+) ion per subunit.</text>
</comment>
<comment type="pathway">
    <text evidence="2">Purine metabolism; IMP biosynthesis via de novo pathway; N(1)-(5-phospho-D-ribosyl)glycinamide from 5-phospho-alpha-D-ribose 1-diphosphate: step 1/2.</text>
</comment>
<comment type="similarity">
    <text evidence="2">In the C-terminal section; belongs to the purine/pyrimidine phosphoribosyltransferase family.</text>
</comment>
<evidence type="ECO:0000250" key="1"/>
<evidence type="ECO:0000255" key="2">
    <source>
        <dbReference type="HAMAP-Rule" id="MF_01931"/>
    </source>
</evidence>
<evidence type="ECO:0000256" key="3">
    <source>
        <dbReference type="SAM" id="MobiDB-lite"/>
    </source>
</evidence>
<proteinExistence type="inferred from homology"/>
<protein>
    <recommendedName>
        <fullName evidence="2">Amidophosphoribosyltransferase</fullName>
        <shortName evidence="2">ATase</shortName>
        <ecNumber evidence="2">2.4.2.14</ecNumber>
    </recommendedName>
    <alternativeName>
        <fullName evidence="2">Glutamine phosphoribosylpyrophosphate amidotransferase</fullName>
        <shortName evidence="2">GPATase</shortName>
    </alternativeName>
</protein>
<name>PUR1_HAEIN</name>
<dbReference type="EC" id="2.4.2.14" evidence="2"/>
<dbReference type="EMBL" id="L42023">
    <property type="protein sequence ID" value="AAC22861.1"/>
    <property type="molecule type" value="Genomic_DNA"/>
</dbReference>
<dbReference type="PIR" id="I64189">
    <property type="entry name" value="I64189"/>
</dbReference>
<dbReference type="RefSeq" id="NP_439363.1">
    <property type="nucleotide sequence ID" value="NC_000907.1"/>
</dbReference>
<dbReference type="SMR" id="P43854"/>
<dbReference type="STRING" id="71421.HI_1207"/>
<dbReference type="MEROPS" id="C44.001"/>
<dbReference type="EnsemblBacteria" id="AAC22861">
    <property type="protein sequence ID" value="AAC22861"/>
    <property type="gene ID" value="HI_1207"/>
</dbReference>
<dbReference type="KEGG" id="hin:HI_1207"/>
<dbReference type="PATRIC" id="fig|71421.8.peg.1259"/>
<dbReference type="eggNOG" id="COG0034">
    <property type="taxonomic scope" value="Bacteria"/>
</dbReference>
<dbReference type="HOGENOM" id="CLU_022389_2_1_6"/>
<dbReference type="OrthoDB" id="9801213at2"/>
<dbReference type="PhylomeDB" id="P43854"/>
<dbReference type="BioCyc" id="HINF71421:G1GJ1-1238-MONOMER"/>
<dbReference type="UniPathway" id="UPA00074">
    <property type="reaction ID" value="UER00124"/>
</dbReference>
<dbReference type="Proteomes" id="UP000000579">
    <property type="component" value="Chromosome"/>
</dbReference>
<dbReference type="GO" id="GO:0005737">
    <property type="term" value="C:cytoplasm"/>
    <property type="evidence" value="ECO:0000318"/>
    <property type="project" value="GO_Central"/>
</dbReference>
<dbReference type="GO" id="GO:0004044">
    <property type="term" value="F:amidophosphoribosyltransferase activity"/>
    <property type="evidence" value="ECO:0000318"/>
    <property type="project" value="GO_Central"/>
</dbReference>
<dbReference type="GO" id="GO:0000287">
    <property type="term" value="F:magnesium ion binding"/>
    <property type="evidence" value="ECO:0007669"/>
    <property type="project" value="UniProtKB-UniRule"/>
</dbReference>
<dbReference type="GO" id="GO:0006189">
    <property type="term" value="P:'de novo' IMP biosynthetic process"/>
    <property type="evidence" value="ECO:0007669"/>
    <property type="project" value="UniProtKB-UniRule"/>
</dbReference>
<dbReference type="GO" id="GO:0009113">
    <property type="term" value="P:purine nucleobase biosynthetic process"/>
    <property type="evidence" value="ECO:0007669"/>
    <property type="project" value="InterPro"/>
</dbReference>
<dbReference type="GO" id="GO:0006164">
    <property type="term" value="P:purine nucleotide biosynthetic process"/>
    <property type="evidence" value="ECO:0000318"/>
    <property type="project" value="GO_Central"/>
</dbReference>
<dbReference type="CDD" id="cd00715">
    <property type="entry name" value="GPATase_N"/>
    <property type="match status" value="1"/>
</dbReference>
<dbReference type="CDD" id="cd06223">
    <property type="entry name" value="PRTases_typeI"/>
    <property type="match status" value="1"/>
</dbReference>
<dbReference type="FunFam" id="3.60.20.10:FF:000011">
    <property type="entry name" value="Amidophosphoribosyltransferase"/>
    <property type="match status" value="1"/>
</dbReference>
<dbReference type="Gene3D" id="3.40.50.2020">
    <property type="match status" value="1"/>
</dbReference>
<dbReference type="Gene3D" id="3.60.20.10">
    <property type="entry name" value="Glutamine Phosphoribosylpyrophosphate, subunit 1, domain 1"/>
    <property type="match status" value="1"/>
</dbReference>
<dbReference type="HAMAP" id="MF_01931">
    <property type="entry name" value="PurF"/>
    <property type="match status" value="1"/>
</dbReference>
<dbReference type="InterPro" id="IPR017932">
    <property type="entry name" value="GATase_2_dom"/>
</dbReference>
<dbReference type="InterPro" id="IPR029055">
    <property type="entry name" value="Ntn_hydrolases_N"/>
</dbReference>
<dbReference type="InterPro" id="IPR000836">
    <property type="entry name" value="PRibTrfase_dom"/>
</dbReference>
<dbReference type="InterPro" id="IPR029057">
    <property type="entry name" value="PRTase-like"/>
</dbReference>
<dbReference type="InterPro" id="IPR005854">
    <property type="entry name" value="PurF"/>
</dbReference>
<dbReference type="InterPro" id="IPR035584">
    <property type="entry name" value="PurF_N"/>
</dbReference>
<dbReference type="NCBIfam" id="TIGR01134">
    <property type="entry name" value="purF"/>
    <property type="match status" value="1"/>
</dbReference>
<dbReference type="PANTHER" id="PTHR11907">
    <property type="entry name" value="AMIDOPHOSPHORIBOSYLTRANSFERASE"/>
    <property type="match status" value="1"/>
</dbReference>
<dbReference type="Pfam" id="PF13522">
    <property type="entry name" value="GATase_6"/>
    <property type="match status" value="1"/>
</dbReference>
<dbReference type="Pfam" id="PF00156">
    <property type="entry name" value="Pribosyltran"/>
    <property type="match status" value="1"/>
</dbReference>
<dbReference type="PIRSF" id="PIRSF000485">
    <property type="entry name" value="Amd_phspho_trans"/>
    <property type="match status" value="1"/>
</dbReference>
<dbReference type="SUPFAM" id="SSF56235">
    <property type="entry name" value="N-terminal nucleophile aminohydrolases (Ntn hydrolases)"/>
    <property type="match status" value="1"/>
</dbReference>
<dbReference type="SUPFAM" id="SSF53271">
    <property type="entry name" value="PRTase-like"/>
    <property type="match status" value="1"/>
</dbReference>
<dbReference type="PROSITE" id="PS51278">
    <property type="entry name" value="GATASE_TYPE_2"/>
    <property type="match status" value="1"/>
</dbReference>
<dbReference type="PROSITE" id="PS00103">
    <property type="entry name" value="PUR_PYR_PR_TRANSFER"/>
    <property type="match status" value="1"/>
</dbReference>
<gene>
    <name evidence="2" type="primary">purF</name>
    <name type="ordered locus">HI_1207</name>
</gene>
<accession>P43854</accession>
<keyword id="KW-0315">Glutamine amidotransferase</keyword>
<keyword id="KW-0328">Glycosyltransferase</keyword>
<keyword id="KW-0460">Magnesium</keyword>
<keyword id="KW-0479">Metal-binding</keyword>
<keyword id="KW-0658">Purine biosynthesis</keyword>
<keyword id="KW-1185">Reference proteome</keyword>
<keyword id="KW-0808">Transferase</keyword>
<feature type="initiator methionine" description="Removed" evidence="1">
    <location>
        <position position="1"/>
    </location>
</feature>
<feature type="chain" id="PRO_0000139639" description="Amidophosphoribosyltransferase">
    <location>
        <begin position="2"/>
        <end position="505"/>
    </location>
</feature>
<feature type="domain" description="Glutamine amidotransferase type-2" evidence="2">
    <location>
        <begin position="2"/>
        <end position="235"/>
    </location>
</feature>
<feature type="region of interest" description="Disordered" evidence="3">
    <location>
        <begin position="484"/>
        <end position="505"/>
    </location>
</feature>
<feature type="compositionally biased region" description="Polar residues" evidence="3">
    <location>
        <begin position="496"/>
        <end position="505"/>
    </location>
</feature>
<feature type="active site" description="Nucleophile" evidence="2">
    <location>
        <position position="2"/>
    </location>
</feature>
<feature type="binding site" evidence="2">
    <location>
        <position position="306"/>
    </location>
    <ligand>
        <name>Mg(2+)</name>
        <dbReference type="ChEBI" id="CHEBI:18420"/>
    </ligand>
</feature>
<feature type="binding site" evidence="2">
    <location>
        <position position="368"/>
    </location>
    <ligand>
        <name>Mg(2+)</name>
        <dbReference type="ChEBI" id="CHEBI:18420"/>
    </ligand>
</feature>
<feature type="binding site" evidence="2">
    <location>
        <position position="369"/>
    </location>
    <ligand>
        <name>Mg(2+)</name>
        <dbReference type="ChEBI" id="CHEBI:18420"/>
    </ligand>
</feature>